<dbReference type="EMBL" id="AF303741">
    <property type="protein sequence ID" value="AAD48149.1"/>
    <property type="molecule type" value="Genomic_DNA"/>
</dbReference>
<dbReference type="SMR" id="Q9QSK3"/>
<dbReference type="KEGG" id="vg:921679"/>
<dbReference type="OrthoDB" id="5394at10239"/>
<dbReference type="Proteomes" id="UP000001359">
    <property type="component" value="Genome"/>
</dbReference>
<dbReference type="GO" id="GO:0016887">
    <property type="term" value="F:ATP hydrolysis activity"/>
    <property type="evidence" value="ECO:0007669"/>
    <property type="project" value="InterPro"/>
</dbReference>
<dbReference type="GO" id="GO:0003678">
    <property type="term" value="F:DNA helicase activity"/>
    <property type="evidence" value="ECO:0007669"/>
    <property type="project" value="InterPro"/>
</dbReference>
<dbReference type="GO" id="GO:0006281">
    <property type="term" value="P:DNA repair"/>
    <property type="evidence" value="ECO:0007669"/>
    <property type="project" value="InterPro"/>
</dbReference>
<dbReference type="GO" id="GO:0000723">
    <property type="term" value="P:telomere maintenance"/>
    <property type="evidence" value="ECO:0007669"/>
    <property type="project" value="InterPro"/>
</dbReference>
<dbReference type="CDD" id="cd18037">
    <property type="entry name" value="DEXSc_Pif1_like"/>
    <property type="match status" value="1"/>
</dbReference>
<dbReference type="CDD" id="cd18809">
    <property type="entry name" value="SF1_C_RecD"/>
    <property type="match status" value="1"/>
</dbReference>
<dbReference type="Gene3D" id="3.40.50.300">
    <property type="entry name" value="P-loop containing nucleotide triphosphate hydrolases"/>
    <property type="match status" value="2"/>
</dbReference>
<dbReference type="InterPro" id="IPR003593">
    <property type="entry name" value="AAA+_ATPase"/>
</dbReference>
<dbReference type="InterPro" id="IPR010285">
    <property type="entry name" value="DNA_helicase_pif1-like_DEAD"/>
</dbReference>
<dbReference type="InterPro" id="IPR027417">
    <property type="entry name" value="P-loop_NTPase"/>
</dbReference>
<dbReference type="InterPro" id="IPR049163">
    <property type="entry name" value="Pif1-like_2B_dom"/>
</dbReference>
<dbReference type="InterPro" id="IPR051055">
    <property type="entry name" value="PIF1_helicase"/>
</dbReference>
<dbReference type="PANTHER" id="PTHR47642">
    <property type="entry name" value="ATP-DEPENDENT DNA HELICASE"/>
    <property type="match status" value="1"/>
</dbReference>
<dbReference type="PANTHER" id="PTHR47642:SF7">
    <property type="entry name" value="ATP-DEPENDENT DNA HELICASE PIF1"/>
    <property type="match status" value="1"/>
</dbReference>
<dbReference type="Pfam" id="PF05970">
    <property type="entry name" value="PIF1"/>
    <property type="match status" value="1"/>
</dbReference>
<dbReference type="Pfam" id="PF21530">
    <property type="entry name" value="Pif1_2B_dom"/>
    <property type="match status" value="1"/>
</dbReference>
<dbReference type="SMART" id="SM00382">
    <property type="entry name" value="AAA"/>
    <property type="match status" value="1"/>
</dbReference>
<dbReference type="SUPFAM" id="SSF52540">
    <property type="entry name" value="P-loop containing nucleoside triphosphate hydrolases"/>
    <property type="match status" value="2"/>
</dbReference>
<protein>
    <recommendedName>
        <fullName>Uncharacterized protein 030L</fullName>
    </recommendedName>
</protein>
<name>VF030_IIV6</name>
<comment type="similarity">
    <text evidence="2">Belongs to the IIV-6 030L family.</text>
</comment>
<gene>
    <name type="ORF">IIV6-030L</name>
</gene>
<keyword id="KW-1185">Reference proteome</keyword>
<organism>
    <name type="scientific">Invertebrate iridescent virus 6</name>
    <name type="common">IIV-6</name>
    <name type="synonym">Chilo iridescent virus</name>
    <dbReference type="NCBI Taxonomy" id="176652"/>
    <lineage>
        <taxon>Viruses</taxon>
        <taxon>Varidnaviria</taxon>
        <taxon>Bamfordvirae</taxon>
        <taxon>Nucleocytoviricota</taxon>
        <taxon>Megaviricetes</taxon>
        <taxon>Pimascovirales</taxon>
        <taxon>Iridoviridae</taxon>
        <taxon>Betairidovirinae</taxon>
        <taxon>Iridovirus</taxon>
    </lineage>
</organism>
<sequence>MELNKNYKLNKQQSRALTLMCQDKNIFITAPAGAGKTLLINHYCDYVRQHEPFKKIAITSTTGVSAILIGGSTLHSYLGIGLGDGTIEDLVQRIKKASKGIKERVWKELTTLIIDEVSMLNPVLFDKLEKIARIIRGSDLPFGGIQLILSGDLLQLPVVKGGGTGNKNDHNMEFVTDANSWKKCIGNNIVLLTEIMRQKDFHFKEILLKIRVGNIDQQVRSVLSQHMKKEEKLKKEEIQPTRLFCLKKYVQDLNDSELKKLEDSGKKFINFNALIKKYSEEAVLTNKGRSRCTDLQFKFLSDRFVKDSTTPQHLRVCEGAQVMLTYNIDQLSGLVNGSRGVIIGFTEMKFPIVRFKNHKRNNLTPKLNKTNEDIKSDSTSQPQGFPEGNRRVMENPETKVSKTDDEEMNDTLELEVRPQTWEICNDFGKKIGYFKQIPLKIAYALTIHSCQGSTLDSAEVDLSDTFEHGQVYTALSRTRDLNSLVIKNLCFDSIKCHPRALQFYDDIKSMQDAISEIENSLSELDFDDDF</sequence>
<reference key="1">
    <citation type="journal article" date="2001" name="Virology">
        <title>Analysis of the first complete DNA sequence of an invertebrate iridovirus: coding strategy of the genome of Chilo iridescent virus.</title>
        <authorList>
            <person name="Jakob N.J."/>
            <person name="Mueller K."/>
            <person name="Bahr U."/>
            <person name="Darai G."/>
        </authorList>
    </citation>
    <scope>NUCLEOTIDE SEQUENCE [LARGE SCALE GENOMIC DNA]</scope>
</reference>
<reference key="2">
    <citation type="journal article" date="2007" name="Virol. J.">
        <title>Comparative genomic analysis of the family Iridoviridae: re-annotating and defining the core set of iridovirus genes.</title>
        <authorList>
            <person name="Eaton H.E."/>
            <person name="Metcalf J."/>
            <person name="Penny E."/>
            <person name="Tcherepanov V."/>
            <person name="Upton C."/>
            <person name="Brunetti C.R."/>
        </authorList>
    </citation>
    <scope>GENOME REANNOTATION</scope>
</reference>
<proteinExistence type="inferred from homology"/>
<accession>Q9QSK3</accession>
<evidence type="ECO:0000256" key="1">
    <source>
        <dbReference type="SAM" id="MobiDB-lite"/>
    </source>
</evidence>
<evidence type="ECO:0000305" key="2"/>
<feature type="chain" id="PRO_0000377964" description="Uncharacterized protein 030L">
    <location>
        <begin position="1"/>
        <end position="530"/>
    </location>
</feature>
<feature type="region of interest" description="Disordered" evidence="1">
    <location>
        <begin position="362"/>
        <end position="408"/>
    </location>
</feature>
<feature type="compositionally biased region" description="Basic and acidic residues" evidence="1">
    <location>
        <begin position="388"/>
        <end position="403"/>
    </location>
</feature>
<organismHost>
    <name type="scientific">Acheta domesticus</name>
    <name type="common">House cricket</name>
    <dbReference type="NCBI Taxonomy" id="6997"/>
</organismHost>
<organismHost>
    <name type="scientific">Chilo suppressalis</name>
    <name type="common">Asiatic rice borer moth</name>
    <dbReference type="NCBI Taxonomy" id="168631"/>
</organismHost>
<organismHost>
    <name type="scientific">Gryllus bimaculatus</name>
    <name type="common">Two-spotted cricket</name>
    <dbReference type="NCBI Taxonomy" id="6999"/>
</organismHost>
<organismHost>
    <name type="scientific">Gryllus campestris</name>
    <dbReference type="NCBI Taxonomy" id="58607"/>
</organismHost>
<organismHost>
    <name type="scientific">Spodoptera frugiperda</name>
    <name type="common">Fall armyworm</name>
    <dbReference type="NCBI Taxonomy" id="7108"/>
</organismHost>